<protein>
    <recommendedName>
        <fullName evidence="1">Phospho-N-acetylmuramoyl-pentapeptide-transferase</fullName>
        <ecNumber evidence="1">2.7.8.13</ecNumber>
    </recommendedName>
    <alternativeName>
        <fullName evidence="1">UDP-MurNAc-pentapeptide phosphotransferase</fullName>
    </alternativeName>
</protein>
<evidence type="ECO:0000255" key="1">
    <source>
        <dbReference type="HAMAP-Rule" id="MF_00038"/>
    </source>
</evidence>
<organism>
    <name type="scientific">Bacillus anthracis (strain A0248)</name>
    <dbReference type="NCBI Taxonomy" id="592021"/>
    <lineage>
        <taxon>Bacteria</taxon>
        <taxon>Bacillati</taxon>
        <taxon>Bacillota</taxon>
        <taxon>Bacilli</taxon>
        <taxon>Bacillales</taxon>
        <taxon>Bacillaceae</taxon>
        <taxon>Bacillus</taxon>
        <taxon>Bacillus cereus group</taxon>
    </lineage>
</organism>
<name>MRAY_BACAA</name>
<reference key="1">
    <citation type="submission" date="2009-04" db="EMBL/GenBank/DDBJ databases">
        <title>Genome sequence of Bacillus anthracis A0248.</title>
        <authorList>
            <person name="Dodson R.J."/>
            <person name="Munk A.C."/>
            <person name="Bruce D."/>
            <person name="Detter C."/>
            <person name="Tapia R."/>
            <person name="Sutton G."/>
            <person name="Sims D."/>
            <person name="Brettin T."/>
        </authorList>
    </citation>
    <scope>NUCLEOTIDE SEQUENCE [LARGE SCALE GENOMIC DNA]</scope>
    <source>
        <strain>A0248</strain>
    </source>
</reference>
<gene>
    <name evidence="1" type="primary">mraY</name>
    <name type="ordered locus">BAA_4078</name>
</gene>
<accession>C3P683</accession>
<keyword id="KW-0131">Cell cycle</keyword>
<keyword id="KW-0132">Cell division</keyword>
<keyword id="KW-1003">Cell membrane</keyword>
<keyword id="KW-0133">Cell shape</keyword>
<keyword id="KW-0961">Cell wall biogenesis/degradation</keyword>
<keyword id="KW-0460">Magnesium</keyword>
<keyword id="KW-0472">Membrane</keyword>
<keyword id="KW-0479">Metal-binding</keyword>
<keyword id="KW-0573">Peptidoglycan synthesis</keyword>
<keyword id="KW-0808">Transferase</keyword>
<keyword id="KW-0812">Transmembrane</keyword>
<keyword id="KW-1133">Transmembrane helix</keyword>
<comment type="function">
    <text evidence="1">Catalyzes the initial step of the lipid cycle reactions in the biosynthesis of the cell wall peptidoglycan: transfers peptidoglycan precursor phospho-MurNAc-pentapeptide from UDP-MurNAc-pentapeptide onto the lipid carrier undecaprenyl phosphate, yielding undecaprenyl-pyrophosphoryl-MurNAc-pentapeptide, known as lipid I.</text>
</comment>
<comment type="catalytic activity">
    <reaction evidence="1">
        <text>UDP-N-acetyl-alpha-D-muramoyl-L-alanyl-gamma-D-glutamyl-meso-2,6-diaminopimeloyl-D-alanyl-D-alanine + di-trans,octa-cis-undecaprenyl phosphate = di-trans,octa-cis-undecaprenyl diphospho-N-acetyl-alpha-D-muramoyl-L-alanyl-D-glutamyl-meso-2,6-diaminopimeloyl-D-alanyl-D-alanine + UMP</text>
        <dbReference type="Rhea" id="RHEA:28386"/>
        <dbReference type="ChEBI" id="CHEBI:57865"/>
        <dbReference type="ChEBI" id="CHEBI:60392"/>
        <dbReference type="ChEBI" id="CHEBI:61386"/>
        <dbReference type="ChEBI" id="CHEBI:61387"/>
        <dbReference type="EC" id="2.7.8.13"/>
    </reaction>
</comment>
<comment type="cofactor">
    <cofactor evidence="1">
        <name>Mg(2+)</name>
        <dbReference type="ChEBI" id="CHEBI:18420"/>
    </cofactor>
</comment>
<comment type="pathway">
    <text evidence="1">Cell wall biogenesis; peptidoglycan biosynthesis.</text>
</comment>
<comment type="subcellular location">
    <subcellularLocation>
        <location evidence="1">Cell membrane</location>
        <topology evidence="1">Multi-pass membrane protein</topology>
    </subcellularLocation>
</comment>
<comment type="similarity">
    <text evidence="1">Belongs to the glycosyltransferase 4 family. MraY subfamily.</text>
</comment>
<proteinExistence type="inferred from homology"/>
<dbReference type="EC" id="2.7.8.13" evidence="1"/>
<dbReference type="EMBL" id="CP001598">
    <property type="protein sequence ID" value="ACQ49437.1"/>
    <property type="molecule type" value="Genomic_DNA"/>
</dbReference>
<dbReference type="RefSeq" id="WP_000893056.1">
    <property type="nucleotide sequence ID" value="NC_012659.1"/>
</dbReference>
<dbReference type="SMR" id="C3P683"/>
<dbReference type="GeneID" id="45023742"/>
<dbReference type="KEGG" id="bai:BAA_4078"/>
<dbReference type="HOGENOM" id="CLU_023982_0_1_9"/>
<dbReference type="UniPathway" id="UPA00219"/>
<dbReference type="GO" id="GO:0005886">
    <property type="term" value="C:plasma membrane"/>
    <property type="evidence" value="ECO:0007669"/>
    <property type="project" value="UniProtKB-SubCell"/>
</dbReference>
<dbReference type="GO" id="GO:0046872">
    <property type="term" value="F:metal ion binding"/>
    <property type="evidence" value="ECO:0007669"/>
    <property type="project" value="UniProtKB-KW"/>
</dbReference>
<dbReference type="GO" id="GO:0008963">
    <property type="term" value="F:phospho-N-acetylmuramoyl-pentapeptide-transferase activity"/>
    <property type="evidence" value="ECO:0007669"/>
    <property type="project" value="UniProtKB-UniRule"/>
</dbReference>
<dbReference type="GO" id="GO:0051992">
    <property type="term" value="F:UDP-N-acetylmuramoyl-L-alanyl-D-glutamyl-meso-2,6-diaminopimelyl-D-alanyl-D-alanine:undecaprenyl-phosphate transferase activity"/>
    <property type="evidence" value="ECO:0007669"/>
    <property type="project" value="RHEA"/>
</dbReference>
<dbReference type="GO" id="GO:0051301">
    <property type="term" value="P:cell division"/>
    <property type="evidence" value="ECO:0007669"/>
    <property type="project" value="UniProtKB-KW"/>
</dbReference>
<dbReference type="GO" id="GO:0071555">
    <property type="term" value="P:cell wall organization"/>
    <property type="evidence" value="ECO:0007669"/>
    <property type="project" value="UniProtKB-KW"/>
</dbReference>
<dbReference type="GO" id="GO:0009252">
    <property type="term" value="P:peptidoglycan biosynthetic process"/>
    <property type="evidence" value="ECO:0007669"/>
    <property type="project" value="UniProtKB-UniRule"/>
</dbReference>
<dbReference type="GO" id="GO:0008360">
    <property type="term" value="P:regulation of cell shape"/>
    <property type="evidence" value="ECO:0007669"/>
    <property type="project" value="UniProtKB-KW"/>
</dbReference>
<dbReference type="CDD" id="cd06852">
    <property type="entry name" value="GT_MraY"/>
    <property type="match status" value="1"/>
</dbReference>
<dbReference type="HAMAP" id="MF_00038">
    <property type="entry name" value="MraY"/>
    <property type="match status" value="1"/>
</dbReference>
<dbReference type="InterPro" id="IPR000715">
    <property type="entry name" value="Glycosyl_transferase_4"/>
</dbReference>
<dbReference type="InterPro" id="IPR003524">
    <property type="entry name" value="PNAcMuramoyl-5peptid_Trfase"/>
</dbReference>
<dbReference type="InterPro" id="IPR018480">
    <property type="entry name" value="PNAcMuramoyl-5peptid_Trfase_CS"/>
</dbReference>
<dbReference type="NCBIfam" id="TIGR00445">
    <property type="entry name" value="mraY"/>
    <property type="match status" value="1"/>
</dbReference>
<dbReference type="PANTHER" id="PTHR22926">
    <property type="entry name" value="PHOSPHO-N-ACETYLMURAMOYL-PENTAPEPTIDE-TRANSFERASE"/>
    <property type="match status" value="1"/>
</dbReference>
<dbReference type="PANTHER" id="PTHR22926:SF5">
    <property type="entry name" value="PHOSPHO-N-ACETYLMURAMOYL-PENTAPEPTIDE-TRANSFERASE HOMOLOG"/>
    <property type="match status" value="1"/>
</dbReference>
<dbReference type="Pfam" id="PF00953">
    <property type="entry name" value="Glycos_transf_4"/>
    <property type="match status" value="1"/>
</dbReference>
<dbReference type="Pfam" id="PF10555">
    <property type="entry name" value="MraY_sig1"/>
    <property type="match status" value="1"/>
</dbReference>
<dbReference type="PROSITE" id="PS01348">
    <property type="entry name" value="MRAY_2"/>
    <property type="match status" value="1"/>
</dbReference>
<sequence>MLEQGLLVTAGVAFLISVALSPLFIPFLRKLKFGQSIRDEGPKSHQKKSGTPTMGGIVIYVSMMVTSLIMAIKFNHLGAEVSLLLLVTFGYGLIGFLDDYIKVVKKRNLGLTSKQKLVGQLVIAIAFFFIGKGQAFHTYIMIPGTDVKFELGWAYFVLVLFMLIGGSNAVNLTDGLDGLLSGTAAIAFGAFSIIAVAQEQFGVAIFCMAVVGAVLGFLVFNANPAEVFMGDTGSLALGGAIAAVAILLKQELLLVIIGGVFVMETLSVIIQVISFKTTGKRVFKMSPLHHHYELCGWSEWRVVVTFWSVGFLLAVLGIYIGVWM</sequence>
<feature type="chain" id="PRO_1000117160" description="Phospho-N-acetylmuramoyl-pentapeptide-transferase">
    <location>
        <begin position="1"/>
        <end position="324"/>
    </location>
</feature>
<feature type="transmembrane region" description="Helical" evidence="1">
    <location>
        <begin position="5"/>
        <end position="25"/>
    </location>
</feature>
<feature type="transmembrane region" description="Helical" evidence="1">
    <location>
        <begin position="52"/>
        <end position="72"/>
    </location>
</feature>
<feature type="transmembrane region" description="Helical" evidence="1">
    <location>
        <begin position="77"/>
        <end position="97"/>
    </location>
</feature>
<feature type="transmembrane region" description="Helical" evidence="1">
    <location>
        <begin position="122"/>
        <end position="142"/>
    </location>
</feature>
<feature type="transmembrane region" description="Helical" evidence="1">
    <location>
        <begin position="149"/>
        <end position="169"/>
    </location>
</feature>
<feature type="transmembrane region" description="Helical" evidence="1">
    <location>
        <begin position="176"/>
        <end position="196"/>
    </location>
</feature>
<feature type="transmembrane region" description="Helical" evidence="1">
    <location>
        <begin position="201"/>
        <end position="221"/>
    </location>
</feature>
<feature type="transmembrane region" description="Helical" evidence="1">
    <location>
        <begin position="227"/>
        <end position="247"/>
    </location>
</feature>
<feature type="transmembrane region" description="Helical" evidence="1">
    <location>
        <begin position="253"/>
        <end position="273"/>
    </location>
</feature>
<feature type="transmembrane region" description="Helical" evidence="1">
    <location>
        <begin position="302"/>
        <end position="322"/>
    </location>
</feature>